<gene>
    <name evidence="1" type="primary">fmt</name>
    <name type="ordered locus">HCH_00029</name>
</gene>
<protein>
    <recommendedName>
        <fullName evidence="1">Methionyl-tRNA formyltransferase</fullName>
        <ecNumber evidence="1">2.1.2.9</ecNumber>
    </recommendedName>
</protein>
<reference key="1">
    <citation type="journal article" date="2005" name="Nucleic Acids Res.">
        <title>Genomic blueprint of Hahella chejuensis, a marine microbe producing an algicidal agent.</title>
        <authorList>
            <person name="Jeong H."/>
            <person name="Yim J.H."/>
            <person name="Lee C."/>
            <person name="Choi S.-H."/>
            <person name="Park Y.K."/>
            <person name="Yoon S.H."/>
            <person name="Hur C.-G."/>
            <person name="Kang H.-Y."/>
            <person name="Kim D."/>
            <person name="Lee H.H."/>
            <person name="Park K.H."/>
            <person name="Park S.-H."/>
            <person name="Park H.-S."/>
            <person name="Lee H.K."/>
            <person name="Oh T.K."/>
            <person name="Kim J.F."/>
        </authorList>
    </citation>
    <scope>NUCLEOTIDE SEQUENCE [LARGE SCALE GENOMIC DNA]</scope>
    <source>
        <strain>KCTC 2396</strain>
    </source>
</reference>
<name>FMT_HAHCH</name>
<dbReference type="EC" id="2.1.2.9" evidence="1"/>
<dbReference type="EMBL" id="CP000155">
    <property type="protein sequence ID" value="ABC26952.1"/>
    <property type="molecule type" value="Genomic_DNA"/>
</dbReference>
<dbReference type="RefSeq" id="WP_011394029.1">
    <property type="nucleotide sequence ID" value="NC_007645.1"/>
</dbReference>
<dbReference type="SMR" id="Q2SQX2"/>
<dbReference type="STRING" id="349521.HCH_00029"/>
<dbReference type="KEGG" id="hch:HCH_00029"/>
<dbReference type="eggNOG" id="COG0223">
    <property type="taxonomic scope" value="Bacteria"/>
</dbReference>
<dbReference type="HOGENOM" id="CLU_033347_1_2_6"/>
<dbReference type="OrthoDB" id="9802815at2"/>
<dbReference type="Proteomes" id="UP000000238">
    <property type="component" value="Chromosome"/>
</dbReference>
<dbReference type="GO" id="GO:0005829">
    <property type="term" value="C:cytosol"/>
    <property type="evidence" value="ECO:0007669"/>
    <property type="project" value="TreeGrafter"/>
</dbReference>
<dbReference type="GO" id="GO:0004479">
    <property type="term" value="F:methionyl-tRNA formyltransferase activity"/>
    <property type="evidence" value="ECO:0007669"/>
    <property type="project" value="UniProtKB-UniRule"/>
</dbReference>
<dbReference type="CDD" id="cd08646">
    <property type="entry name" value="FMT_core_Met-tRNA-FMT_N"/>
    <property type="match status" value="1"/>
</dbReference>
<dbReference type="CDD" id="cd08704">
    <property type="entry name" value="Met_tRNA_FMT_C"/>
    <property type="match status" value="1"/>
</dbReference>
<dbReference type="FunFam" id="3.40.50.12230:FF:000001">
    <property type="entry name" value="Methionyl-tRNA formyltransferase"/>
    <property type="match status" value="1"/>
</dbReference>
<dbReference type="FunFam" id="3.40.50.170:FF:000003">
    <property type="entry name" value="Methionyl-tRNA formyltransferase"/>
    <property type="match status" value="1"/>
</dbReference>
<dbReference type="Gene3D" id="3.10.25.10">
    <property type="entry name" value="Formyl transferase, C-terminal domain"/>
    <property type="match status" value="1"/>
</dbReference>
<dbReference type="Gene3D" id="3.40.50.170">
    <property type="entry name" value="Formyl transferase, N-terminal domain"/>
    <property type="match status" value="1"/>
</dbReference>
<dbReference type="HAMAP" id="MF_00182">
    <property type="entry name" value="Formyl_trans"/>
    <property type="match status" value="1"/>
</dbReference>
<dbReference type="InterPro" id="IPR005794">
    <property type="entry name" value="Fmt"/>
</dbReference>
<dbReference type="InterPro" id="IPR005793">
    <property type="entry name" value="Formyl_trans_C"/>
</dbReference>
<dbReference type="InterPro" id="IPR037022">
    <property type="entry name" value="Formyl_trans_C_sf"/>
</dbReference>
<dbReference type="InterPro" id="IPR002376">
    <property type="entry name" value="Formyl_transf_N"/>
</dbReference>
<dbReference type="InterPro" id="IPR036477">
    <property type="entry name" value="Formyl_transf_N_sf"/>
</dbReference>
<dbReference type="InterPro" id="IPR011034">
    <property type="entry name" value="Formyl_transferase-like_C_sf"/>
</dbReference>
<dbReference type="InterPro" id="IPR001555">
    <property type="entry name" value="GART_AS"/>
</dbReference>
<dbReference type="InterPro" id="IPR044135">
    <property type="entry name" value="Met-tRNA-FMT_C"/>
</dbReference>
<dbReference type="InterPro" id="IPR041711">
    <property type="entry name" value="Met-tRNA-FMT_N"/>
</dbReference>
<dbReference type="NCBIfam" id="TIGR00460">
    <property type="entry name" value="fmt"/>
    <property type="match status" value="1"/>
</dbReference>
<dbReference type="PANTHER" id="PTHR11138">
    <property type="entry name" value="METHIONYL-TRNA FORMYLTRANSFERASE"/>
    <property type="match status" value="1"/>
</dbReference>
<dbReference type="PANTHER" id="PTHR11138:SF5">
    <property type="entry name" value="METHIONYL-TRNA FORMYLTRANSFERASE, MITOCHONDRIAL"/>
    <property type="match status" value="1"/>
</dbReference>
<dbReference type="Pfam" id="PF02911">
    <property type="entry name" value="Formyl_trans_C"/>
    <property type="match status" value="1"/>
</dbReference>
<dbReference type="Pfam" id="PF00551">
    <property type="entry name" value="Formyl_trans_N"/>
    <property type="match status" value="1"/>
</dbReference>
<dbReference type="SUPFAM" id="SSF50486">
    <property type="entry name" value="FMT C-terminal domain-like"/>
    <property type="match status" value="1"/>
</dbReference>
<dbReference type="SUPFAM" id="SSF53328">
    <property type="entry name" value="Formyltransferase"/>
    <property type="match status" value="1"/>
</dbReference>
<dbReference type="PROSITE" id="PS00373">
    <property type="entry name" value="GART"/>
    <property type="match status" value="1"/>
</dbReference>
<comment type="function">
    <text evidence="1">Attaches a formyl group to the free amino group of methionyl-tRNA(fMet). The formyl group appears to play a dual role in the initiator identity of N-formylmethionyl-tRNA by promoting its recognition by IF2 and preventing the misappropriation of this tRNA by the elongation apparatus.</text>
</comment>
<comment type="catalytic activity">
    <reaction evidence="1">
        <text>L-methionyl-tRNA(fMet) + (6R)-10-formyltetrahydrofolate = N-formyl-L-methionyl-tRNA(fMet) + (6S)-5,6,7,8-tetrahydrofolate + H(+)</text>
        <dbReference type="Rhea" id="RHEA:24380"/>
        <dbReference type="Rhea" id="RHEA-COMP:9952"/>
        <dbReference type="Rhea" id="RHEA-COMP:9953"/>
        <dbReference type="ChEBI" id="CHEBI:15378"/>
        <dbReference type="ChEBI" id="CHEBI:57453"/>
        <dbReference type="ChEBI" id="CHEBI:78530"/>
        <dbReference type="ChEBI" id="CHEBI:78844"/>
        <dbReference type="ChEBI" id="CHEBI:195366"/>
        <dbReference type="EC" id="2.1.2.9"/>
    </reaction>
</comment>
<comment type="similarity">
    <text evidence="1">Belongs to the Fmt family.</text>
</comment>
<organism>
    <name type="scientific">Hahella chejuensis (strain KCTC 2396)</name>
    <dbReference type="NCBI Taxonomy" id="349521"/>
    <lineage>
        <taxon>Bacteria</taxon>
        <taxon>Pseudomonadati</taxon>
        <taxon>Pseudomonadota</taxon>
        <taxon>Gammaproteobacteria</taxon>
        <taxon>Oceanospirillales</taxon>
        <taxon>Hahellaceae</taxon>
        <taxon>Hahella</taxon>
    </lineage>
</organism>
<accession>Q2SQX2</accession>
<feature type="chain" id="PRO_1000020076" description="Methionyl-tRNA formyltransferase">
    <location>
        <begin position="1"/>
        <end position="318"/>
    </location>
</feature>
<feature type="binding site" evidence="1">
    <location>
        <begin position="113"/>
        <end position="116"/>
    </location>
    <ligand>
        <name>(6S)-5,6,7,8-tetrahydrofolate</name>
        <dbReference type="ChEBI" id="CHEBI:57453"/>
    </ligand>
</feature>
<keyword id="KW-0648">Protein biosynthesis</keyword>
<keyword id="KW-1185">Reference proteome</keyword>
<keyword id="KW-0808">Transferase</keyword>
<evidence type="ECO:0000255" key="1">
    <source>
        <dbReference type="HAMAP-Rule" id="MF_00182"/>
    </source>
</evidence>
<sequence>MSSPLKVIFAGTPDFAASALQALLDANYQIVAVYTQPDRPAGRGNKLLPGPVKQLALKHTIPVEQPLNFKNEEDRQQLRDYEADVMVVAAYGIILPQAVLDAPKRGCLNIHASLLPRWRGAAPIQRAIIAGDQESGITIMQMEAGLDTGPMLLKTVTPISADDTGRTLHDRLAQMGGEAIVKALALLQEDKLQAERQQDDLATYAHKLQKEEARIDWSEPASLIQRKIAAFNPWPVCFTEDNGQTIRIWAASASADMSKAKPGTILERSAEAVKVACGEGVLSITSLQLPGGKPISCKDLINGGKPLMQLGQVLEITS</sequence>
<proteinExistence type="inferred from homology"/>